<accession>P72761</accession>
<keyword id="KW-0002">3D-structure</keyword>
<keyword id="KW-1283">Bacterial microcompartment</keyword>
<keyword id="KW-0120">Carbon dioxide fixation</keyword>
<keyword id="KW-1282">Carboxysome</keyword>
<keyword id="KW-0602">Photosynthesis</keyword>
<keyword id="KW-1185">Reference proteome</keyword>
<reference key="1">
    <citation type="journal article" date="1996" name="DNA Res.">
        <title>Sequence analysis of the genome of the unicellular cyanobacterium Synechocystis sp. strain PCC6803. II. Sequence determination of the entire genome and assignment of potential protein-coding regions.</title>
        <authorList>
            <person name="Kaneko T."/>
            <person name="Sato S."/>
            <person name="Kotani H."/>
            <person name="Tanaka A."/>
            <person name="Asamizu E."/>
            <person name="Nakamura Y."/>
            <person name="Miyajima N."/>
            <person name="Hirosawa M."/>
            <person name="Sugiura M."/>
            <person name="Sasamoto S."/>
            <person name="Kimura T."/>
            <person name="Hosouchi T."/>
            <person name="Matsuno A."/>
            <person name="Muraki A."/>
            <person name="Nakazaki N."/>
            <person name="Naruo K."/>
            <person name="Okumura S."/>
            <person name="Shimpo S."/>
            <person name="Takeuchi C."/>
            <person name="Wada T."/>
            <person name="Watanabe A."/>
            <person name="Yamada M."/>
            <person name="Yasuda M."/>
            <person name="Tabata S."/>
        </authorList>
    </citation>
    <scope>NUCLEOTIDE SEQUENCE [LARGE SCALE GENOMIC DNA]</scope>
    <source>
        <strain>ATCC 27184 / PCC 6803 / Kazusa</strain>
    </source>
</reference>
<reference key="2">
    <citation type="journal article" date="2008" name="J. Bacteriol.">
        <title>A multiprotein bicarbonate dehydration complex essential to carboxysome function in cyanobacteria.</title>
        <authorList>
            <person name="Cot S.S."/>
            <person name="So A.K."/>
            <person name="Espie G.S."/>
        </authorList>
    </citation>
    <scope>INTERACTION WITH CCMM</scope>
    <source>
        <strain>ATCC 27184 / PCC 6803 / Kazusa</strain>
    </source>
</reference>
<reference key="3">
    <citation type="journal article" date="2009" name="Protein Sci.">
        <title>Two-dimensional crystals of carboxysome shell proteins recapitulate the hexagonal packing of three-dimensional crystals.</title>
        <authorList>
            <person name="Dryden K.A."/>
            <person name="Crowley C.S."/>
            <person name="Tanaka S."/>
            <person name="Yeates T.O."/>
            <person name="Yeager M."/>
        </authorList>
    </citation>
    <scope>FUNCTION</scope>
    <scope>TWO-DIMENSIONAL CRYSTALS</scope>
    <scope>SUBUNIT</scope>
    <source>
        <strain>ATCC 27184 / PCC 6803 / Kazusa</strain>
    </source>
</reference>
<reference key="4">
    <citation type="journal article" date="2019" name="PLoS ONE">
        <title>Occurrence and stability of hetero-hexamer associations formed by beta-carboxysome CcmK shell components.</title>
        <authorList>
            <person name="Garcia-Alles L.F."/>
            <person name="Root K."/>
            <person name="Maveyraud L."/>
            <person name="Aubry N."/>
            <person name="Lesniewska E."/>
            <person name="Mourey L."/>
            <person name="Zenobi R."/>
            <person name="Truan G."/>
        </authorList>
    </citation>
    <scope>SUBUNIT</scope>
    <source>
        <strain>ATCC 27184 / PCC 6803 / Kazusa</strain>
    </source>
</reference>
<reference evidence="13" key="5">
    <citation type="journal article" date="2005" name="Science">
        <title>Protein structures forming the shell of primitive bacterial organelles.</title>
        <authorList>
            <person name="Kerfeld C.A."/>
            <person name="Sawaya M.R."/>
            <person name="Tanaka S."/>
            <person name="Nguyen C.V."/>
            <person name="Phillips M."/>
            <person name="Beeby M."/>
            <person name="Yeates T.O."/>
        </authorList>
    </citation>
    <scope>X-RAY CRYSTALLOGRAPHY (2.90 ANGSTROMS)</scope>
    <scope>FUNCTION</scope>
    <scope>SUBUNIT</scope>
    <scope>DOMAIN</scope>
</reference>
<reference evidence="14 15" key="6">
    <citation type="journal article" date="2009" name="Protein Sci.">
        <title>Insights from multiple structures of the shell proteins from the beta-carboxysome.</title>
        <authorList>
            <person name="Tanaka S."/>
            <person name="Sawaya M.R."/>
            <person name="Phillips M."/>
            <person name="Yeates T.O."/>
        </authorList>
    </citation>
    <scope>X-RAY CRYSTALLOGRAPHY (1.30 ANGSTROMS) OF 1-91</scope>
    <scope>FUNCTION</scope>
    <scope>SUBUNIT</scope>
    <scope>DOMAIN</scope>
    <scope>MUTAGENESIS OF 92-ARG--TYR-103</scope>
    <source>
        <strain>ATCC 27184 / PCC 6803 / Kazusa</strain>
    </source>
</reference>
<organism>
    <name type="scientific">Synechocystis sp. (strain ATCC 27184 / PCC 6803 / Kazusa)</name>
    <dbReference type="NCBI Taxonomy" id="1111708"/>
    <lineage>
        <taxon>Bacteria</taxon>
        <taxon>Bacillati</taxon>
        <taxon>Cyanobacteriota</taxon>
        <taxon>Cyanophyceae</taxon>
        <taxon>Synechococcales</taxon>
        <taxon>Merismopediaceae</taxon>
        <taxon>Synechocystis</taxon>
    </lineage>
</organism>
<name>CCMK2_SYNY3</name>
<proteinExistence type="evidence at protein level"/>
<sequence length="103" mass="11135">MSIAVGMIETRGFPAVVEAADSMVKAARVTLVGYEKIGSGRVTVIVRGDVSEVQASVSAGIEAANRVNGGEVLSTHIIARPHENLEYVLPIRYTEEVEQFRTY</sequence>
<evidence type="ECO:0000250" key="1"/>
<evidence type="ECO:0000255" key="2">
    <source>
        <dbReference type="HAMAP-Rule" id="MF_00854"/>
    </source>
</evidence>
<evidence type="ECO:0000269" key="3">
    <source>
    </source>
</evidence>
<evidence type="ECO:0000269" key="4">
    <source>
    </source>
</evidence>
<evidence type="ECO:0000269" key="5">
    <source>
    </source>
</evidence>
<evidence type="ECO:0000269" key="6">
    <source>
    </source>
</evidence>
<evidence type="ECO:0000269" key="7">
    <source>
    </source>
</evidence>
<evidence type="ECO:0000303" key="8">
    <source>
    </source>
</evidence>
<evidence type="ECO:0000305" key="9">
    <source>
    </source>
</evidence>
<evidence type="ECO:0000305" key="10">
    <source>
    </source>
</evidence>
<evidence type="ECO:0000305" key="11">
    <source>
    </source>
</evidence>
<evidence type="ECO:0000305" key="12">
    <source>
    </source>
</evidence>
<evidence type="ECO:0007744" key="13">
    <source>
        <dbReference type="PDB" id="2A1B"/>
    </source>
</evidence>
<evidence type="ECO:0007744" key="14">
    <source>
        <dbReference type="PDB" id="3CIM"/>
    </source>
</evidence>
<evidence type="ECO:0007744" key="15">
    <source>
        <dbReference type="PDB" id="3DNC"/>
    </source>
</evidence>
<evidence type="ECO:0007829" key="16">
    <source>
        <dbReference type="PDB" id="2A1B"/>
    </source>
</evidence>
<evidence type="ECO:0007829" key="17">
    <source>
        <dbReference type="PDB" id="3CIM"/>
    </source>
</evidence>
<feature type="initiator methionine" description="Removed" evidence="1">
    <location>
        <position position="1"/>
    </location>
</feature>
<feature type="chain" id="PRO_0000201507" description="Carboxysome shell protein CcmK2">
    <location>
        <begin position="2"/>
        <end position="103"/>
    </location>
</feature>
<feature type="domain" description="BMC" evidence="2">
    <location>
        <begin position="4"/>
        <end position="90"/>
    </location>
</feature>
<feature type="mutagenesis site" description="Alters hexamer layer packing." evidence="5">
    <location>
        <begin position="92"/>
        <end position="103"/>
    </location>
</feature>
<feature type="strand" evidence="17">
    <location>
        <begin position="4"/>
        <end position="12"/>
    </location>
</feature>
<feature type="helix" evidence="17">
    <location>
        <begin position="13"/>
        <end position="26"/>
    </location>
</feature>
<feature type="strand" evidence="17">
    <location>
        <begin position="27"/>
        <end position="38"/>
    </location>
</feature>
<feature type="strand" evidence="17">
    <location>
        <begin position="41"/>
        <end position="48"/>
    </location>
</feature>
<feature type="helix" evidence="17">
    <location>
        <begin position="50"/>
        <end position="65"/>
    </location>
</feature>
<feature type="strand" evidence="17">
    <location>
        <begin position="71"/>
        <end position="80"/>
    </location>
</feature>
<feature type="helix" evidence="17">
    <location>
        <begin position="83"/>
        <end position="87"/>
    </location>
</feature>
<feature type="helix" evidence="16">
    <location>
        <begin position="98"/>
        <end position="101"/>
    </location>
</feature>
<dbReference type="EMBL" id="BA000022">
    <property type="protein sequence ID" value="BAA16776.1"/>
    <property type="molecule type" value="Genomic_DNA"/>
</dbReference>
<dbReference type="PIR" id="S74624">
    <property type="entry name" value="S74624"/>
</dbReference>
<dbReference type="PDB" id="2A1B">
    <property type="method" value="X-ray"/>
    <property type="resolution" value="2.90 A"/>
    <property type="chains" value="A/B/C/D/E/F/G/H/I/J/K/L=1-103"/>
</dbReference>
<dbReference type="PDB" id="3CIM">
    <property type="method" value="X-ray"/>
    <property type="resolution" value="1.30 A"/>
    <property type="chains" value="A/B/C=1-91"/>
</dbReference>
<dbReference type="PDB" id="3DNC">
    <property type="method" value="X-ray"/>
    <property type="resolution" value="2.05 A"/>
    <property type="chains" value="A=1-91"/>
</dbReference>
<dbReference type="PDB" id="9IV7">
    <property type="method" value="X-ray"/>
    <property type="resolution" value="2.50 A"/>
    <property type="chains" value="D/E=1-103"/>
</dbReference>
<dbReference type="PDBsum" id="2A1B"/>
<dbReference type="PDBsum" id="3CIM"/>
<dbReference type="PDBsum" id="3DNC"/>
<dbReference type="PDBsum" id="9IV7"/>
<dbReference type="SMR" id="P72761"/>
<dbReference type="IntAct" id="P72761">
    <property type="interactions" value="3"/>
</dbReference>
<dbReference type="STRING" id="1148.gene:10497632"/>
<dbReference type="PaxDb" id="1148-1651849"/>
<dbReference type="EnsemblBacteria" id="BAA16776">
    <property type="protein sequence ID" value="BAA16776"/>
    <property type="gene ID" value="BAA16776"/>
</dbReference>
<dbReference type="KEGG" id="syn:sll1028"/>
<dbReference type="eggNOG" id="COG4577">
    <property type="taxonomic scope" value="Bacteria"/>
</dbReference>
<dbReference type="InParanoid" id="P72761"/>
<dbReference type="PhylomeDB" id="P72761"/>
<dbReference type="EvolutionaryTrace" id="P72761"/>
<dbReference type="Proteomes" id="UP000001425">
    <property type="component" value="Chromosome"/>
</dbReference>
<dbReference type="GO" id="GO:0031470">
    <property type="term" value="C:carboxysome"/>
    <property type="evidence" value="ECO:0007669"/>
    <property type="project" value="UniProtKB-SubCell"/>
</dbReference>
<dbReference type="GO" id="GO:0043886">
    <property type="term" value="F:structural constituent of carboxysome shell"/>
    <property type="evidence" value="ECO:0000353"/>
    <property type="project" value="UniProtKB"/>
</dbReference>
<dbReference type="GO" id="GO:0015977">
    <property type="term" value="P:carbon fixation"/>
    <property type="evidence" value="ECO:0007669"/>
    <property type="project" value="UniProtKB-UniRule"/>
</dbReference>
<dbReference type="GO" id="GO:0015979">
    <property type="term" value="P:photosynthesis"/>
    <property type="evidence" value="ECO:0007669"/>
    <property type="project" value="UniProtKB-KW"/>
</dbReference>
<dbReference type="CDD" id="cd07057">
    <property type="entry name" value="BMC_CcmK"/>
    <property type="match status" value="1"/>
</dbReference>
<dbReference type="FunFam" id="3.30.70.1710:FF:000001">
    <property type="entry name" value="Ethanolamine utilization protein EutM"/>
    <property type="match status" value="1"/>
</dbReference>
<dbReference type="Gene3D" id="3.30.70.1710">
    <property type="match status" value="1"/>
</dbReference>
<dbReference type="HAMAP" id="MF_00854">
    <property type="entry name" value="CcmK"/>
    <property type="match status" value="1"/>
</dbReference>
<dbReference type="InterPro" id="IPR020808">
    <property type="entry name" value="Bact_microcomp_CS"/>
</dbReference>
<dbReference type="InterPro" id="IPR000249">
    <property type="entry name" value="BMC_dom"/>
</dbReference>
<dbReference type="InterPro" id="IPR050575">
    <property type="entry name" value="BMC_shell"/>
</dbReference>
<dbReference type="InterPro" id="IPR046380">
    <property type="entry name" value="CcmK"/>
</dbReference>
<dbReference type="InterPro" id="IPR037233">
    <property type="entry name" value="CcmK-like_sf"/>
</dbReference>
<dbReference type="InterPro" id="IPR044872">
    <property type="entry name" value="CcmK/CsoS1_BMC"/>
</dbReference>
<dbReference type="PANTHER" id="PTHR33941:SF13">
    <property type="entry name" value="CARBOXYSOME SHELL PROTEIN CCMK4"/>
    <property type="match status" value="1"/>
</dbReference>
<dbReference type="PANTHER" id="PTHR33941">
    <property type="entry name" value="PROPANEDIOL UTILIZATION PROTEIN PDUA"/>
    <property type="match status" value="1"/>
</dbReference>
<dbReference type="Pfam" id="PF00936">
    <property type="entry name" value="BMC"/>
    <property type="match status" value="1"/>
</dbReference>
<dbReference type="SMART" id="SM00877">
    <property type="entry name" value="BMC"/>
    <property type="match status" value="1"/>
</dbReference>
<dbReference type="SUPFAM" id="SSF143414">
    <property type="entry name" value="CcmK-like"/>
    <property type="match status" value="1"/>
</dbReference>
<dbReference type="PROSITE" id="PS01139">
    <property type="entry name" value="BMC_1"/>
    <property type="match status" value="1"/>
</dbReference>
<dbReference type="PROSITE" id="PS51930">
    <property type="entry name" value="BMC_2"/>
    <property type="match status" value="1"/>
</dbReference>
<protein>
    <recommendedName>
        <fullName evidence="8">Carboxysome shell protein CcmK2</fullName>
    </recommendedName>
    <alternativeName>
        <fullName>Carbon dioxide-concentrating mechanism protein CcmK2</fullName>
    </alternativeName>
</protein>
<comment type="function">
    <text evidence="3 6 9 11">One of the shell proteins of the carboxysome, a polyhedral inclusion where RuBisCO (ribulose bisphosphate carboxylase, rbcL-rbcS) is sequestered. The central pore probably regulates metabolite flux (PubMed:16081736). Hexamers make sheets that form the facets of the polyhedral carboxysome (Probable) (PubMed:19844993).</text>
</comment>
<comment type="subunit">
    <text evidence="3 4 5 7">Homohexamer, might also make dodecamers (PubMed:16081736, PubMed:19177356, PubMed:31603944). Interacts with full-length CcmM (PubMed:17993516). Forms mixed heterohexamers of all possible stoichiometries with CcmK1, which might form dodecamers. Only very weak interactions with CcmK3 and CcmK4 were seen (PubMed:31603944).</text>
</comment>
<comment type="subcellular location">
    <subcellularLocation>
        <location evidence="2 9 10 11 12">Carboxysome</location>
    </subcellularLocation>
    <text evidence="10">This cyanobacterium makes beta-type carboxysomes.</text>
</comment>
<comment type="domain">
    <text evidence="3 5">The tight homohexamer forms a pore with an opening of about 5.9 Angstroms in diameter which is positively charged. The C-terminal flexible tail, which is the most variable part of CcmK proteins, seems to be involved in packing of hexamers in layers.</text>
</comment>
<comment type="similarity">
    <text evidence="2">Belongs to the bacterial microcompartments protein family. CcmK subfamily.</text>
</comment>
<gene>
    <name evidence="8" type="primary">ccmK2</name>
    <name type="ordered locus">sll1028</name>
</gene>